<accession>A1WJL0</accession>
<comment type="function">
    <text evidence="1">Catalyzes the synthesis of beta-nicotinate D-ribonucleotide from nicotinate and 5-phospho-D-ribose 1-phosphate at the expense of ATP.</text>
</comment>
<comment type="catalytic activity">
    <reaction evidence="1">
        <text>nicotinate + 5-phospho-alpha-D-ribose 1-diphosphate + ATP + H2O = nicotinate beta-D-ribonucleotide + ADP + phosphate + diphosphate</text>
        <dbReference type="Rhea" id="RHEA:36163"/>
        <dbReference type="ChEBI" id="CHEBI:15377"/>
        <dbReference type="ChEBI" id="CHEBI:30616"/>
        <dbReference type="ChEBI" id="CHEBI:32544"/>
        <dbReference type="ChEBI" id="CHEBI:33019"/>
        <dbReference type="ChEBI" id="CHEBI:43474"/>
        <dbReference type="ChEBI" id="CHEBI:57502"/>
        <dbReference type="ChEBI" id="CHEBI:58017"/>
        <dbReference type="ChEBI" id="CHEBI:456216"/>
        <dbReference type="EC" id="6.3.4.21"/>
    </reaction>
</comment>
<comment type="pathway">
    <text evidence="1">Cofactor biosynthesis; NAD(+) biosynthesis; nicotinate D-ribonucleotide from nicotinate: step 1/1.</text>
</comment>
<comment type="PTM">
    <text evidence="1">Transiently phosphorylated on a His residue during the reaction cycle. Phosphorylation strongly increases the affinity for substrates and increases the rate of nicotinate D-ribonucleotide production. Dephosphorylation regenerates the low-affinity form of the enzyme, leading to product release.</text>
</comment>
<comment type="similarity">
    <text evidence="1">Belongs to the NAPRTase family.</text>
</comment>
<evidence type="ECO:0000255" key="1">
    <source>
        <dbReference type="HAMAP-Rule" id="MF_00570"/>
    </source>
</evidence>
<name>PNCB_VEREI</name>
<sequence>MIITSLLDTDLYKFTMMQVVLHQFPGAQVEYRFKCRNPGVQLAPYVAEIRGEIRSLCSLQFQDAELDYLRSMRFIKSDFVDFLGLFRLNEKYISVAPRPGGEIDICIRGPWLHTILFEIPVLAIVNEVYFRNTQKVPDFPEGRRRLDAKIALLQAEGLEELKIADYGTRRRFSRAWHEEVLRVLVARLGTGDQCAEAPAGPGQFAGTSNVLYAMKLGVTPLGTMAHEYLQACQALGPRLRDSQVFGFEIWAREYRGDLGIALSDVYGMSAFLRDFDLYFCKLFDGARQDSGDPFAWGERLLAHYRKLRVDPQSKTLIFSDALTVTRTIELYRQFRGRCQLAFGIGTHLTNDLGSPPAHEPLQVVIKMTRCNGQPVAKLADSPGKGMCDDEKYLAYLRQVFDIPAQA</sequence>
<keyword id="KW-0436">Ligase</keyword>
<keyword id="KW-0597">Phosphoprotein</keyword>
<keyword id="KW-0662">Pyridine nucleotide biosynthesis</keyword>
<keyword id="KW-1185">Reference proteome</keyword>
<dbReference type="EC" id="6.3.4.21" evidence="1"/>
<dbReference type="EMBL" id="CP000542">
    <property type="protein sequence ID" value="ABM57817.1"/>
    <property type="molecule type" value="Genomic_DNA"/>
</dbReference>
<dbReference type="RefSeq" id="WP_011809823.1">
    <property type="nucleotide sequence ID" value="NC_008786.1"/>
</dbReference>
<dbReference type="SMR" id="A1WJL0"/>
<dbReference type="STRING" id="391735.Veis_2067"/>
<dbReference type="GeneID" id="76460643"/>
<dbReference type="KEGG" id="vei:Veis_2067"/>
<dbReference type="eggNOG" id="COG1488">
    <property type="taxonomic scope" value="Bacteria"/>
</dbReference>
<dbReference type="HOGENOM" id="CLU_030991_1_0_4"/>
<dbReference type="OrthoDB" id="9771406at2"/>
<dbReference type="UniPathway" id="UPA00253">
    <property type="reaction ID" value="UER00457"/>
</dbReference>
<dbReference type="Proteomes" id="UP000000374">
    <property type="component" value="Chromosome"/>
</dbReference>
<dbReference type="GO" id="GO:0005829">
    <property type="term" value="C:cytosol"/>
    <property type="evidence" value="ECO:0007669"/>
    <property type="project" value="TreeGrafter"/>
</dbReference>
<dbReference type="GO" id="GO:0004516">
    <property type="term" value="F:nicotinate phosphoribosyltransferase activity"/>
    <property type="evidence" value="ECO:0007669"/>
    <property type="project" value="UniProtKB-UniRule"/>
</dbReference>
<dbReference type="GO" id="GO:0034355">
    <property type="term" value="P:NAD biosynthetic process via the salvage pathway"/>
    <property type="evidence" value="ECO:0007669"/>
    <property type="project" value="TreeGrafter"/>
</dbReference>
<dbReference type="CDD" id="cd01401">
    <property type="entry name" value="PncB_like"/>
    <property type="match status" value="1"/>
</dbReference>
<dbReference type="Gene3D" id="3.20.140.10">
    <property type="entry name" value="nicotinate phosphoribosyltransferase"/>
    <property type="match status" value="1"/>
</dbReference>
<dbReference type="HAMAP" id="MF_00570">
    <property type="entry name" value="NAPRTase"/>
    <property type="match status" value="1"/>
</dbReference>
<dbReference type="InterPro" id="IPR041525">
    <property type="entry name" value="N/Namide_PRibTrfase"/>
</dbReference>
<dbReference type="InterPro" id="IPR040727">
    <property type="entry name" value="NAPRTase_N"/>
</dbReference>
<dbReference type="InterPro" id="IPR006406">
    <property type="entry name" value="Nic_PRibTrfase"/>
</dbReference>
<dbReference type="InterPro" id="IPR007229">
    <property type="entry name" value="Nic_PRibTrfase-Fam"/>
</dbReference>
<dbReference type="InterPro" id="IPR036068">
    <property type="entry name" value="Nicotinate_pribotase-like_C"/>
</dbReference>
<dbReference type="NCBIfam" id="TIGR01514">
    <property type="entry name" value="NAPRTase"/>
    <property type="match status" value="1"/>
</dbReference>
<dbReference type="NCBIfam" id="NF003704">
    <property type="entry name" value="PRK05321.1"/>
    <property type="match status" value="1"/>
</dbReference>
<dbReference type="PANTHER" id="PTHR11098">
    <property type="entry name" value="NICOTINATE PHOSPHORIBOSYLTRANSFERASE"/>
    <property type="match status" value="1"/>
</dbReference>
<dbReference type="PANTHER" id="PTHR11098:SF1">
    <property type="entry name" value="NICOTINATE PHOSPHORIBOSYLTRANSFERASE"/>
    <property type="match status" value="1"/>
</dbReference>
<dbReference type="Pfam" id="PF04095">
    <property type="entry name" value="NAPRTase"/>
    <property type="match status" value="1"/>
</dbReference>
<dbReference type="Pfam" id="PF17767">
    <property type="entry name" value="NAPRTase_N"/>
    <property type="match status" value="1"/>
</dbReference>
<dbReference type="PIRSF" id="PIRSF000484">
    <property type="entry name" value="NAPRT"/>
    <property type="match status" value="1"/>
</dbReference>
<dbReference type="SUPFAM" id="SSF51690">
    <property type="entry name" value="Nicotinate/Quinolinate PRTase C-terminal domain-like"/>
    <property type="match status" value="1"/>
</dbReference>
<dbReference type="SUPFAM" id="SSF54675">
    <property type="entry name" value="Nicotinate/Quinolinate PRTase N-terminal domain-like"/>
    <property type="match status" value="1"/>
</dbReference>
<protein>
    <recommendedName>
        <fullName evidence="1">Nicotinate phosphoribosyltransferase</fullName>
        <shortName evidence="1">NAPRTase</shortName>
        <ecNumber evidence="1">6.3.4.21</ecNumber>
    </recommendedName>
</protein>
<proteinExistence type="inferred from homology"/>
<organism>
    <name type="scientific">Verminephrobacter eiseniae (strain EF01-2)</name>
    <dbReference type="NCBI Taxonomy" id="391735"/>
    <lineage>
        <taxon>Bacteria</taxon>
        <taxon>Pseudomonadati</taxon>
        <taxon>Pseudomonadota</taxon>
        <taxon>Betaproteobacteria</taxon>
        <taxon>Burkholderiales</taxon>
        <taxon>Comamonadaceae</taxon>
        <taxon>Verminephrobacter</taxon>
    </lineage>
</organism>
<feature type="chain" id="PRO_1000129491" description="Nicotinate phosphoribosyltransferase">
    <location>
        <begin position="1"/>
        <end position="406"/>
    </location>
</feature>
<feature type="modified residue" description="Phosphohistidine; by autocatalysis" evidence="1">
    <location>
        <position position="226"/>
    </location>
</feature>
<reference key="1">
    <citation type="submission" date="2006-12" db="EMBL/GenBank/DDBJ databases">
        <title>Complete sequence of chromosome 1 of Verminephrobacter eiseniae EF01-2.</title>
        <authorList>
            <person name="Copeland A."/>
            <person name="Lucas S."/>
            <person name="Lapidus A."/>
            <person name="Barry K."/>
            <person name="Detter J.C."/>
            <person name="Glavina del Rio T."/>
            <person name="Dalin E."/>
            <person name="Tice H."/>
            <person name="Pitluck S."/>
            <person name="Chertkov O."/>
            <person name="Brettin T."/>
            <person name="Bruce D."/>
            <person name="Han C."/>
            <person name="Tapia R."/>
            <person name="Gilna P."/>
            <person name="Schmutz J."/>
            <person name="Larimer F."/>
            <person name="Land M."/>
            <person name="Hauser L."/>
            <person name="Kyrpides N."/>
            <person name="Kim E."/>
            <person name="Stahl D."/>
            <person name="Richardson P."/>
        </authorList>
    </citation>
    <scope>NUCLEOTIDE SEQUENCE [LARGE SCALE GENOMIC DNA]</scope>
    <source>
        <strain>EF01-2</strain>
    </source>
</reference>
<gene>
    <name evidence="1" type="primary">pncB</name>
    <name type="ordered locus">Veis_2067</name>
</gene>